<reference key="1">
    <citation type="journal article" date="2002" name="J. Bacteriol.">
        <title>Whole-genome comparison of Mycobacterium tuberculosis clinical and laboratory strains.</title>
        <authorList>
            <person name="Fleischmann R.D."/>
            <person name="Alland D."/>
            <person name="Eisen J.A."/>
            <person name="Carpenter L."/>
            <person name="White O."/>
            <person name="Peterson J.D."/>
            <person name="DeBoy R.T."/>
            <person name="Dodson R.J."/>
            <person name="Gwinn M.L."/>
            <person name="Haft D.H."/>
            <person name="Hickey E.K."/>
            <person name="Kolonay J.F."/>
            <person name="Nelson W.C."/>
            <person name="Umayam L.A."/>
            <person name="Ermolaeva M.D."/>
            <person name="Salzberg S.L."/>
            <person name="Delcher A."/>
            <person name="Utterback T.R."/>
            <person name="Weidman J.F."/>
            <person name="Khouri H.M."/>
            <person name="Gill J."/>
            <person name="Mikula A."/>
            <person name="Bishai W."/>
            <person name="Jacobs W.R. Jr."/>
            <person name="Venter J.C."/>
            <person name="Fraser C.M."/>
        </authorList>
    </citation>
    <scope>NUCLEOTIDE SEQUENCE [LARGE SCALE GENOMIC DNA]</scope>
    <source>
        <strain>CDC 1551 / Oshkosh</strain>
    </source>
</reference>
<accession>P9WPX4</accession>
<accession>L0T751</accession>
<accession>P63627</accession>
<accession>Q10759</accession>
<comment type="function">
    <text evidence="2">Has a dual function in both nitrogen assimilation and in protection against acid stress during infection through asparagine hydrolysis and NH4(+) release. Catalyzes asparagine hydrolysis.</text>
</comment>
<comment type="catalytic activity">
    <reaction evidence="2">
        <text>L-asparagine + H2O = L-aspartate + NH4(+)</text>
        <dbReference type="Rhea" id="RHEA:21016"/>
        <dbReference type="ChEBI" id="CHEBI:15377"/>
        <dbReference type="ChEBI" id="CHEBI:28938"/>
        <dbReference type="ChEBI" id="CHEBI:29991"/>
        <dbReference type="ChEBI" id="CHEBI:58048"/>
        <dbReference type="EC" id="3.5.1.1"/>
    </reaction>
</comment>
<comment type="subcellular location">
    <subcellularLocation>
        <location evidence="2">Secreted</location>
    </subcellularLocation>
    <text evidence="2">Probably secreted via the ESX-5 / type VII secretion system (T7SS).</text>
</comment>
<comment type="similarity">
    <text evidence="4">Belongs to the asparaginase 1 family.</text>
</comment>
<comment type="sequence caution" evidence="4">
    <conflict type="erroneous initiation">
        <sequence resource="EMBL-CDS" id="AAK45856"/>
    </conflict>
    <text>Extended N-terminus.</text>
</comment>
<proteinExistence type="inferred from homology"/>
<organism>
    <name type="scientific">Mycobacterium tuberculosis (strain CDC 1551 / Oshkosh)</name>
    <dbReference type="NCBI Taxonomy" id="83331"/>
    <lineage>
        <taxon>Bacteria</taxon>
        <taxon>Bacillati</taxon>
        <taxon>Actinomycetota</taxon>
        <taxon>Actinomycetes</taxon>
        <taxon>Mycobacteriales</taxon>
        <taxon>Mycobacteriaceae</taxon>
        <taxon>Mycobacterium</taxon>
        <taxon>Mycobacterium tuberculosis complex</taxon>
    </lineage>
</organism>
<sequence length="315" mass="31741">MARLTVITTGGTISTTAGPDGVLRPTHCGATLIAGLDMDSDIEVVDLMALDSSKLTPADWDRIGAAVQEAFRGGADGVVITHGTDTLEETALWLDLTYAGSRPVVLTGAMLSADAPGADGPANLRDALAVAADPAARDLGVLVSFGGRVLQPLGLHKVANPDLCGFAGESLGFTSGGVRLTRTKTRPYLGDLGAAVAPRVDIVAVYPGSDAVAMDACVAAGARAVVLEALGSGNAGAAVIEGVRRHCRDGSDPVVIAVSTRVAGARVGAGYGPGHDLVEAGAVMVPRLPPSQARVLLMAALAANSPVADVIDRWG</sequence>
<feature type="chain" id="PRO_0000426876" description="L-asparaginase">
    <location>
        <begin position="1"/>
        <end position="315"/>
    </location>
</feature>
<feature type="domain" description="Asparaginase/glutaminase" evidence="3">
    <location>
        <begin position="2"/>
        <end position="315"/>
    </location>
</feature>
<feature type="active site" description="O-isoaspartyl threonine intermediate" evidence="1">
    <location>
        <position position="12"/>
    </location>
</feature>
<feature type="binding site" evidence="1">
    <location>
        <begin position="52"/>
        <end position="53"/>
    </location>
    <ligand>
        <name>substrate</name>
    </ligand>
</feature>
<feature type="binding site" evidence="1">
    <location>
        <begin position="84"/>
        <end position="85"/>
    </location>
    <ligand>
        <name>substrate</name>
    </ligand>
</feature>
<evidence type="ECO:0000250" key="1">
    <source>
        <dbReference type="UniProtKB" id="P00805"/>
    </source>
</evidence>
<evidence type="ECO:0000250" key="2">
    <source>
        <dbReference type="UniProtKB" id="P9WPX5"/>
    </source>
</evidence>
<evidence type="ECO:0000255" key="3">
    <source>
        <dbReference type="PROSITE-ProRule" id="PRU01068"/>
    </source>
</evidence>
<evidence type="ECO:0000305" key="4"/>
<gene>
    <name type="primary">ansA</name>
    <name type="ordered locus">MT1590</name>
</gene>
<dbReference type="EC" id="3.5.1.1" evidence="2"/>
<dbReference type="EMBL" id="AE000516">
    <property type="protein sequence ID" value="AAK45856.1"/>
    <property type="status" value="ALT_INIT"/>
    <property type="molecule type" value="Genomic_DNA"/>
</dbReference>
<dbReference type="PIR" id="G70760">
    <property type="entry name" value="G70760"/>
</dbReference>
<dbReference type="SMR" id="P9WPX4"/>
<dbReference type="KEGG" id="mtc:MT1590"/>
<dbReference type="HOGENOM" id="CLU_019134_1_0_11"/>
<dbReference type="Proteomes" id="UP000001020">
    <property type="component" value="Chromosome"/>
</dbReference>
<dbReference type="GO" id="GO:0005576">
    <property type="term" value="C:extracellular region"/>
    <property type="evidence" value="ECO:0007669"/>
    <property type="project" value="UniProtKB-SubCell"/>
</dbReference>
<dbReference type="GO" id="GO:0004067">
    <property type="term" value="F:asparaginase activity"/>
    <property type="evidence" value="ECO:0007669"/>
    <property type="project" value="UniProtKB-EC"/>
</dbReference>
<dbReference type="GO" id="GO:0006528">
    <property type="term" value="P:asparagine metabolic process"/>
    <property type="evidence" value="ECO:0007669"/>
    <property type="project" value="InterPro"/>
</dbReference>
<dbReference type="CDD" id="cd08964">
    <property type="entry name" value="L-asparaginase_II"/>
    <property type="match status" value="1"/>
</dbReference>
<dbReference type="FunFam" id="3.40.50.40:FF:000008">
    <property type="entry name" value="Probable L-asparaginase"/>
    <property type="match status" value="1"/>
</dbReference>
<dbReference type="Gene3D" id="3.40.50.40">
    <property type="match status" value="1"/>
</dbReference>
<dbReference type="Gene3D" id="3.40.50.1170">
    <property type="entry name" value="L-asparaginase, N-terminal domain"/>
    <property type="match status" value="1"/>
</dbReference>
<dbReference type="InterPro" id="IPR004550">
    <property type="entry name" value="AsnASE_II"/>
</dbReference>
<dbReference type="InterPro" id="IPR036152">
    <property type="entry name" value="Asp/glu_Ase-like_sf"/>
</dbReference>
<dbReference type="InterPro" id="IPR006034">
    <property type="entry name" value="Asparaginase/glutaminase-like"/>
</dbReference>
<dbReference type="InterPro" id="IPR020827">
    <property type="entry name" value="Asparaginase/glutaminase_AS1"/>
</dbReference>
<dbReference type="InterPro" id="IPR027475">
    <property type="entry name" value="Asparaginase/glutaminase_AS2"/>
</dbReference>
<dbReference type="InterPro" id="IPR040919">
    <property type="entry name" value="Asparaginase_C"/>
</dbReference>
<dbReference type="InterPro" id="IPR027473">
    <property type="entry name" value="L-asparaginase_C"/>
</dbReference>
<dbReference type="InterPro" id="IPR027474">
    <property type="entry name" value="L-asparaginase_N"/>
</dbReference>
<dbReference type="InterPro" id="IPR037152">
    <property type="entry name" value="L-asparaginase_N_sf"/>
</dbReference>
<dbReference type="PANTHER" id="PTHR11707:SF28">
    <property type="entry name" value="60 KDA LYSOPHOSPHOLIPASE"/>
    <property type="match status" value="1"/>
</dbReference>
<dbReference type="PANTHER" id="PTHR11707">
    <property type="entry name" value="L-ASPARAGINASE"/>
    <property type="match status" value="1"/>
</dbReference>
<dbReference type="Pfam" id="PF00710">
    <property type="entry name" value="Asparaginase"/>
    <property type="match status" value="1"/>
</dbReference>
<dbReference type="Pfam" id="PF17763">
    <property type="entry name" value="Asparaginase_C"/>
    <property type="match status" value="1"/>
</dbReference>
<dbReference type="PIRSF" id="PIRSF001220">
    <property type="entry name" value="L-ASNase_gatD"/>
    <property type="match status" value="1"/>
</dbReference>
<dbReference type="PIRSF" id="PIRSF500176">
    <property type="entry name" value="L_ASNase"/>
    <property type="match status" value="1"/>
</dbReference>
<dbReference type="PRINTS" id="PR00139">
    <property type="entry name" value="ASNGLNASE"/>
</dbReference>
<dbReference type="SFLD" id="SFLDS00057">
    <property type="entry name" value="Glutaminase/Asparaginase"/>
    <property type="match status" value="1"/>
</dbReference>
<dbReference type="SMART" id="SM00870">
    <property type="entry name" value="Asparaginase"/>
    <property type="match status" value="1"/>
</dbReference>
<dbReference type="SUPFAM" id="SSF53774">
    <property type="entry name" value="Glutaminase/Asparaginase"/>
    <property type="match status" value="1"/>
</dbReference>
<dbReference type="PROSITE" id="PS00144">
    <property type="entry name" value="ASN_GLN_ASE_1"/>
    <property type="match status" value="1"/>
</dbReference>
<dbReference type="PROSITE" id="PS00917">
    <property type="entry name" value="ASN_GLN_ASE_2"/>
    <property type="match status" value="1"/>
</dbReference>
<dbReference type="PROSITE" id="PS51732">
    <property type="entry name" value="ASN_GLN_ASE_3"/>
    <property type="match status" value="1"/>
</dbReference>
<name>ASPG_MYCTO</name>
<protein>
    <recommendedName>
        <fullName evidence="2">L-asparaginase</fullName>
        <shortName evidence="2">L-ASNase</shortName>
        <ecNumber evidence="2">3.5.1.1</ecNumber>
    </recommendedName>
    <alternativeName>
        <fullName evidence="2">L-asparagine amidohydrolase</fullName>
    </alternativeName>
</protein>
<keyword id="KW-0378">Hydrolase</keyword>
<keyword id="KW-1185">Reference proteome</keyword>
<keyword id="KW-0964">Secreted</keyword>